<accession>Q18NS6</accession>
<protein>
    <recommendedName>
        <fullName evidence="5">Platelet inhibitor triplatin-2</fullName>
        <shortName evidence="7">Tripla-2</shortName>
    </recommendedName>
</protein>
<sequence>MKMIISLTFLGILMLAFAEVNSETCTLMEAAKNFDENKYFNIPLAYATHSKNREPETNVCREYSTARGPDGKTVTTFTIKDKTLTSAVKCTNTPIPGSNGQFSSDCELSAGNRITVTTSILATDNEKYAILQRCPTSGPGNILVLQTNKNGVEQGVQNYFNQKGWDISTWLSRTTVGC</sequence>
<name>TRIP2_TRIIF</name>
<reference evidence="7" key="1">
    <citation type="journal article" date="2006" name="FEBS J.">
        <title>Identification and characterization of a collagen-induced platelet aggregation inhibitor, triplatin, from salivary glands of the assassin bug, Triatoma infestans.</title>
        <authorList>
            <person name="Morita A."/>
            <person name="Isawa H."/>
            <person name="Orito Y."/>
            <person name="Iwanaga S."/>
            <person name="Chinzei Y."/>
            <person name="Yuda M."/>
        </authorList>
    </citation>
    <scope>NUCLEOTIDE SEQUENCE [MRNA]</scope>
    <scope>SUBCELLULAR LOCATION</scope>
    <scope>TISSUE SPECIFICITY</scope>
    <scope>RECOMBINANT EXPRESSION</scope>
    <source>
        <tissue>Salivary gland</tissue>
    </source>
</reference>
<proteinExistence type="evidence at transcript level"/>
<keyword id="KW-1015">Disulfide bond</keyword>
<keyword id="KW-1199">Hemostasis impairing toxin</keyword>
<keyword id="KW-1201">Platelet aggregation inhibiting toxin</keyword>
<keyword id="KW-0964">Secreted</keyword>
<keyword id="KW-0732">Signal</keyword>
<keyword id="KW-0800">Toxin</keyword>
<evidence type="ECO:0000250" key="1">
    <source>
        <dbReference type="UniProtKB" id="Q18NS7"/>
    </source>
</evidence>
<evidence type="ECO:0000250" key="2">
    <source>
        <dbReference type="UniProtKB" id="Q27049"/>
    </source>
</evidence>
<evidence type="ECO:0000255" key="3"/>
<evidence type="ECO:0000269" key="4">
    <source>
    </source>
</evidence>
<evidence type="ECO:0000303" key="5">
    <source>
    </source>
</evidence>
<evidence type="ECO:0000305" key="6"/>
<evidence type="ECO:0000312" key="7">
    <source>
        <dbReference type="EMBL" id="BAE96122.1"/>
    </source>
</evidence>
<organism>
    <name type="scientific">Triatoma infestans</name>
    <name type="common">Assassin bug</name>
    <dbReference type="NCBI Taxonomy" id="30076"/>
    <lineage>
        <taxon>Eukaryota</taxon>
        <taxon>Metazoa</taxon>
        <taxon>Ecdysozoa</taxon>
        <taxon>Arthropoda</taxon>
        <taxon>Hexapoda</taxon>
        <taxon>Insecta</taxon>
        <taxon>Pterygota</taxon>
        <taxon>Neoptera</taxon>
        <taxon>Paraneoptera</taxon>
        <taxon>Hemiptera</taxon>
        <taxon>Heteroptera</taxon>
        <taxon>Panheteroptera</taxon>
        <taxon>Cimicomorpha</taxon>
        <taxon>Reduviidae</taxon>
        <taxon>Triatominae</taxon>
        <taxon>Triatoma</taxon>
    </lineage>
</organism>
<dbReference type="EMBL" id="AB250210">
    <property type="protein sequence ID" value="BAE96122.1"/>
    <property type="molecule type" value="mRNA"/>
</dbReference>
<dbReference type="SMR" id="Q18NS6"/>
<dbReference type="GO" id="GO:0005576">
    <property type="term" value="C:extracellular region"/>
    <property type="evidence" value="ECO:0007669"/>
    <property type="project" value="UniProtKB-SubCell"/>
</dbReference>
<dbReference type="GO" id="GO:0090729">
    <property type="term" value="F:toxin activity"/>
    <property type="evidence" value="ECO:0007669"/>
    <property type="project" value="UniProtKB-KW"/>
</dbReference>
<dbReference type="GO" id="GO:0030682">
    <property type="term" value="P:symbiont-mediated perturbation of host defenses"/>
    <property type="evidence" value="ECO:0007669"/>
    <property type="project" value="InterPro"/>
</dbReference>
<dbReference type="CDD" id="cd19423">
    <property type="entry name" value="lipocalin_LTBP1-like"/>
    <property type="match status" value="1"/>
</dbReference>
<dbReference type="Gene3D" id="2.40.128.20">
    <property type="match status" value="1"/>
</dbReference>
<dbReference type="InterPro" id="IPR012674">
    <property type="entry name" value="Calycin"/>
</dbReference>
<dbReference type="InterPro" id="IPR005657">
    <property type="entry name" value="Triabi/Procalin"/>
</dbReference>
<dbReference type="Pfam" id="PF03973">
    <property type="entry name" value="Triabin"/>
    <property type="match status" value="1"/>
</dbReference>
<dbReference type="SUPFAM" id="SSF50814">
    <property type="entry name" value="Lipocalins"/>
    <property type="match status" value="1"/>
</dbReference>
<comment type="function">
    <text evidence="1">Inhibits platelet aggregation and vasoconstriction through binding to distinct eicosanoids involved in inflammation (acts as a scavenger), and has a role in inhibiting host innate immunity by impairing platelet-assisted formation of neutrophil extracellular traps (NETs). Inhibits platelet aggregation by collagen, and low doses of thromboxane A2 mimetic (TXA2 mimetic), and arachidonic acid (AA) without affecting aggregation induced by ADP, convulxin (GP6 agonist), and PMA. Binds to TXA2, TXB2, prostaglandine H2 mimetic (PGH2 mimetic), PGJ2, and PGF2alpha. Binding is not observed to leukotrienes, AA, and biogenic amines (PGE1, 5(S)-HETE, 12(S)-HETE, 20-HETE, norepinephrine, epinephrine, serotonin, LTC4 and ADP). Induces relaxation of aorta rat previously contracted with TXA2 mimetic. Moreover, it also impairs platelet-assisted formation of neutrophil extracellular traps (NETs). NETs are web-like structures of DNA and proteins that play an important role in killing of pathogens. In addition, NETs are implicated in thrombus formation. In vivo, this protein exhibits antithrombotic activity in two distinct mice models that are highly dependent on platelets. It is noteworthy that it inhibits thrombosis without promoting excessive bleeding.</text>
</comment>
<comment type="subcellular location">
    <subcellularLocation>
        <location evidence="4">Secreted</location>
    </subcellularLocation>
</comment>
<comment type="tissue specificity">
    <text evidence="4">Expressed in salivary glands.</text>
</comment>
<comment type="similarity">
    <text evidence="6">Belongs to the calycin superfamily. Triabin family.</text>
</comment>
<comment type="caution">
    <text evidence="1">Morita et al. (2006) suggested that this protein inhibits collagen-induce platelet aggregation by binding to platelet glycoprotein VI, but a surface plasmon resonance experiment failed to demonstrate an interaction between these two proteins.</text>
</comment>
<feature type="signal peptide" evidence="3">
    <location>
        <begin position="1"/>
        <end position="18"/>
    </location>
</feature>
<feature type="chain" id="PRO_5004187270" description="Platelet inhibitor triplatin-2">
    <location>
        <begin position="19"/>
        <end position="178"/>
    </location>
</feature>
<feature type="disulfide bond" evidence="2">
    <location>
        <begin position="25"/>
        <end position="134"/>
    </location>
</feature>
<feature type="disulfide bond" evidence="2">
    <location>
        <begin position="60"/>
        <end position="178"/>
    </location>
</feature>
<feature type="disulfide bond" evidence="2">
    <location>
        <begin position="90"/>
        <end position="106"/>
    </location>
</feature>